<protein>
    <recommendedName>
        <fullName>Submaxillary mucin</fullName>
    </recommendedName>
    <alternativeName>
        <fullName>CSM</fullName>
    </alternativeName>
</protein>
<reference evidence="4" key="1">
    <citation type="journal article" date="2004" name="Biochemistry">
        <title>Role of peptide sequence and neighboring residue glycosylation on the substrate specificity of the uridine 5'-diphosphate-alpha-N-acetylgalactosamine:polypeptide N-acetylgalactosaminyl transferases T1 and T2: kinetic modeling of the porcine and canine submaxillary gland mucin tandem repeats.</title>
        <authorList>
            <person name="Gerken T.A."/>
            <person name="Tep C."/>
            <person name="Rarick J."/>
        </authorList>
    </citation>
    <scope>PROTEIN SEQUENCE</scope>
    <scope>GLYCOSYLATION</scope>
    <source>
        <tissue>Submandibular gland</tissue>
    </source>
</reference>
<comment type="subcellular location">
    <subcellularLocation>
        <location evidence="2">Secreted</location>
    </subcellularLocation>
</comment>
<comment type="tissue specificity">
    <text evidence="2">Expressed in the submaxillary salivary gland.</text>
</comment>
<comment type="domain">
    <text evidence="2">The mature protein contains tandemly repeated, identical sequences.</text>
</comment>
<comment type="PTM">
    <text evidence="2">Heavily O-glycosylated at most but not all Ser and Thr residues.</text>
</comment>
<evidence type="ECO:0000256" key="1">
    <source>
        <dbReference type="SAM" id="MobiDB-lite"/>
    </source>
</evidence>
<evidence type="ECO:0000269" key="2">
    <source>
    </source>
</evidence>
<evidence type="ECO:0000303" key="3">
    <source>
    </source>
</evidence>
<evidence type="ECO:0000305" key="4"/>
<name>MUCSM_CANLF</name>
<organism>
    <name type="scientific">Canis lupus familiaris</name>
    <name type="common">Dog</name>
    <name type="synonym">Canis familiaris</name>
    <dbReference type="NCBI Taxonomy" id="9615"/>
    <lineage>
        <taxon>Eukaryota</taxon>
        <taxon>Metazoa</taxon>
        <taxon>Chordata</taxon>
        <taxon>Craniata</taxon>
        <taxon>Vertebrata</taxon>
        <taxon>Euteleostomi</taxon>
        <taxon>Mammalia</taxon>
        <taxon>Eutheria</taxon>
        <taxon>Laurasiatheria</taxon>
        <taxon>Carnivora</taxon>
        <taxon>Caniformia</taxon>
        <taxon>Canidae</taxon>
        <taxon>Canis</taxon>
    </lineage>
</organism>
<feature type="chain" id="PRO_0000158962" description="Submaxillary mucin">
    <location>
        <begin position="1" status="less than"/>
        <end position="89" status="greater than"/>
    </location>
</feature>
<feature type="region of interest" description="Disordered" evidence="1">
    <location>
        <begin position="1"/>
        <end position="89"/>
    </location>
</feature>
<feature type="compositionally biased region" description="Low complexity" evidence="1">
    <location>
        <begin position="56"/>
        <end position="71"/>
    </location>
</feature>
<feature type="glycosylation site" description="O-linked (GalNAc...) serine; partial" evidence="2">
    <location>
        <position position="3"/>
    </location>
</feature>
<feature type="glycosylation site" description="O-linked (GalNAc...) threonine; partial" evidence="2">
    <location>
        <position position="7"/>
    </location>
</feature>
<feature type="glycosylation site" description="O-linked (GalNAc...) threonine; partial" evidence="2">
    <location>
        <position position="14"/>
    </location>
</feature>
<feature type="glycosylation site" description="O-linked (GalNAc...) serine; partial" evidence="2">
    <location>
        <position position="15"/>
    </location>
</feature>
<feature type="glycosylation site" description="O-linked (GalNAc...) threonine; partial" evidence="2">
    <location>
        <position position="23"/>
    </location>
</feature>
<feature type="glycosylation site" description="O-linked (GalNAc...) serine; partial" evidence="2">
    <location>
        <position position="25"/>
    </location>
</feature>
<feature type="glycosylation site" description="O-linked (GalNAc...) threonine; partial" evidence="2">
    <location>
        <position position="27"/>
    </location>
</feature>
<feature type="glycosylation site" description="O-linked (GalNAc...) serine; partial" evidence="2">
    <location>
        <position position="29"/>
    </location>
</feature>
<feature type="glycosylation site" description="O-linked (GalNAc...) threonine; partial" evidence="2">
    <location>
        <position position="34"/>
    </location>
</feature>
<feature type="glycosylation site" description="O-linked (GalNAc...) serine; partial" evidence="2">
    <location>
        <position position="38"/>
    </location>
</feature>
<feature type="glycosylation site" description="O-linked (GalNAc...) threonine; partial" evidence="2">
    <location>
        <position position="42"/>
    </location>
</feature>
<feature type="glycosylation site" description="O-linked (GalNAc...) serine; partial" evidence="2">
    <location>
        <position position="47"/>
    </location>
</feature>
<feature type="glycosylation site" description="O-linked (GalNAc...) serine; partial" evidence="2">
    <location>
        <position position="49"/>
    </location>
</feature>
<feature type="glycosylation site" description="O-linked (GalNAc...) threonine; partial" evidence="2">
    <location>
        <position position="50"/>
    </location>
</feature>
<feature type="glycosylation site" description="O-linked (GalNAc...) serine; partial" evidence="2">
    <location>
        <position position="54"/>
    </location>
</feature>
<feature type="glycosylation site" description="O-linked (GalNAc...) threonine; partial" evidence="2">
    <location>
        <position position="59"/>
    </location>
</feature>
<feature type="glycosylation site" description="O-linked (GalNAc...) threonine; partial" evidence="2">
    <location>
        <position position="60"/>
    </location>
</feature>
<feature type="glycosylation site" description="O-linked (GalNAc...) threonine; partial" evidence="2">
    <location>
        <position position="67"/>
    </location>
</feature>
<feature type="glycosylation site" description="O-linked (GalNAc...) threonine; partial" evidence="2">
    <location>
        <position position="68"/>
    </location>
</feature>
<feature type="glycosylation site" description="O-linked (GalNAc...) serine; partial" evidence="2">
    <location>
        <position position="73"/>
    </location>
</feature>
<feature type="glycosylation site" description="O-linked (GalNAc...) serine; partial" evidence="2">
    <location>
        <position position="76"/>
    </location>
</feature>
<feature type="glycosylation site" description="O-linked (GalNAc...) threonine; partial" evidence="2">
    <location>
        <position position="78"/>
    </location>
</feature>
<feature type="glycosylation site" description="O-linked (GalNAc...) serine; partial" evidence="2">
    <location>
        <position position="83"/>
    </location>
</feature>
<feature type="non-terminal residue" evidence="3">
    <location>
        <position position="1"/>
    </location>
</feature>
<feature type="non-terminal residue" evidence="3">
    <location>
        <position position="89"/>
    </location>
</feature>
<keyword id="KW-0903">Direct protein sequencing</keyword>
<keyword id="KW-0325">Glycoprotein</keyword>
<keyword id="KW-1185">Reference proteome</keyword>
<keyword id="KW-0964">Secreted</keyword>
<proteinExistence type="evidence at protein level"/>
<dbReference type="STRING" id="9615.ENSCAFP00000059472"/>
<dbReference type="iPTMnet" id="P83762"/>
<dbReference type="PaxDb" id="9612-ENSCAFP00000041846"/>
<dbReference type="eggNOG" id="KOG1216">
    <property type="taxonomic scope" value="Eukaryota"/>
</dbReference>
<dbReference type="InParanoid" id="P83762"/>
<dbReference type="Proteomes" id="UP000002254">
    <property type="component" value="Unplaced"/>
</dbReference>
<dbReference type="Proteomes" id="UP000694429">
    <property type="component" value="Unplaced"/>
</dbReference>
<dbReference type="Proteomes" id="UP000694542">
    <property type="component" value="Unplaced"/>
</dbReference>
<dbReference type="Proteomes" id="UP000805418">
    <property type="component" value="Unplaced"/>
</dbReference>
<dbReference type="GO" id="GO:0005576">
    <property type="term" value="C:extracellular region"/>
    <property type="evidence" value="ECO:0007669"/>
    <property type="project" value="UniProtKB-SubCell"/>
</dbReference>
<sequence>AGSVGRTAGGPGFTSPGRVAGGTGSPTASARGGTPGGSEGFTAAPGSESTGGHSGAPGTTLAGRAGTTLGPRSEPSGTGVGGSPVATTL</sequence>
<accession>P83762</accession>